<sequence>MLFIRMLRRAGQSPACGCWTPVLPVRFLGISPRQIPADANFHSASFSDTDHPRVLITGALGQLGVGLANLLRKRFGKDSVILSDIRKPPDHVFHSGPFIYSDILDYKNLREIVVNNRITWLFHYSALLSAFGEANVSLARAVNITGLHNILDVAAEHNLQLFVPSTIGAFGPTSPRNPTPDLCIQRPRTIYGVSKVHAELMGETMQSRFSMMPQSMANSSATWKPARDCP</sequence>
<proteinExistence type="evidence at transcript level"/>
<dbReference type="EMBL" id="AY101186">
    <property type="protein sequence ID" value="AAM50036.1"/>
    <property type="molecule type" value="mRNA"/>
</dbReference>
<dbReference type="EMBL" id="AY101187">
    <property type="protein sequence ID" value="AAM50037.1"/>
    <property type="molecule type" value="mRNA"/>
</dbReference>
<dbReference type="EMBL" id="AK057762">
    <property type="protein sequence ID" value="BAB71562.1"/>
    <property type="molecule type" value="mRNA"/>
</dbReference>
<dbReference type="EMBL" id="AF131216">
    <property type="status" value="NOT_ANNOTATED_CDS"/>
    <property type="molecule type" value="Genomic_DNA"/>
</dbReference>
<dbReference type="SMR" id="Q8IZJ6"/>
<dbReference type="FunCoup" id="Q8IZJ6">
    <property type="interactions" value="83"/>
</dbReference>
<dbReference type="GlyGen" id="Q8IZJ6">
    <property type="glycosylation" value="1 site"/>
</dbReference>
<dbReference type="PhosphoSitePlus" id="Q8IZJ6"/>
<dbReference type="BioMuta" id="HGNC:15547"/>
<dbReference type="DMDM" id="74714590"/>
<dbReference type="PeptideAtlas" id="Q8IZJ6"/>
<dbReference type="AGR" id="HGNC:15547"/>
<dbReference type="GeneCards" id="TDH"/>
<dbReference type="HGNC" id="HGNC:15547">
    <property type="gene designation" value="TDH"/>
</dbReference>
<dbReference type="MIM" id="615174">
    <property type="type" value="gene"/>
</dbReference>
<dbReference type="neXtProt" id="NX_Q8IZJ6"/>
<dbReference type="InParanoid" id="Q8IZJ6"/>
<dbReference type="PAN-GO" id="Q8IZJ6">
    <property type="GO annotations" value="2 GO annotations based on evolutionary models"/>
</dbReference>
<dbReference type="PhylomeDB" id="Q8IZJ6"/>
<dbReference type="BioCyc" id="MetaCyc:ENSG00000154316-MONOMER"/>
<dbReference type="PathwayCommons" id="Q8IZJ6"/>
<dbReference type="Reactome" id="R-HSA-8849175">
    <property type="pathway name" value="Threonine catabolism"/>
</dbReference>
<dbReference type="Pharos" id="Q8IZJ6">
    <property type="development level" value="Tdark"/>
</dbReference>
<dbReference type="PRO" id="PR:Q8IZJ6"/>
<dbReference type="Proteomes" id="UP000005640">
    <property type="component" value="Unplaced"/>
</dbReference>
<dbReference type="RNAct" id="Q8IZJ6">
    <property type="molecule type" value="protein"/>
</dbReference>
<dbReference type="GO" id="GO:0005743">
    <property type="term" value="C:mitochondrial inner membrane"/>
    <property type="evidence" value="ECO:0000304"/>
    <property type="project" value="Reactome"/>
</dbReference>
<dbReference type="FunFam" id="3.40.50.720:FF:000752">
    <property type="entry name" value="L-threonine 3-dehydrogenase, mitochondrial"/>
    <property type="match status" value="1"/>
</dbReference>
<dbReference type="Gene3D" id="3.40.50.720">
    <property type="entry name" value="NAD(P)-binding Rossmann-like Domain"/>
    <property type="match status" value="1"/>
</dbReference>
<dbReference type="InterPro" id="IPR001509">
    <property type="entry name" value="Epimerase_deHydtase"/>
</dbReference>
<dbReference type="InterPro" id="IPR036291">
    <property type="entry name" value="NAD(P)-bd_dom_sf"/>
</dbReference>
<dbReference type="InterPro" id="IPR051225">
    <property type="entry name" value="NAD(P)_epim/dehydratase"/>
</dbReference>
<dbReference type="PANTHER" id="PTHR42687">
    <property type="entry name" value="L-THREONINE 3-DEHYDROGENASE"/>
    <property type="match status" value="1"/>
</dbReference>
<dbReference type="PANTHER" id="PTHR42687:SF1">
    <property type="entry name" value="L-THREONINE 3-DEHYDROGENASE, MITOCHONDRIAL"/>
    <property type="match status" value="1"/>
</dbReference>
<dbReference type="Pfam" id="PF01370">
    <property type="entry name" value="Epimerase"/>
    <property type="match status" value="1"/>
</dbReference>
<dbReference type="SUPFAM" id="SSF51735">
    <property type="entry name" value="NAD(P)-binding Rossmann-fold domains"/>
    <property type="match status" value="1"/>
</dbReference>
<feature type="transit peptide" description="Mitochondrion" evidence="2">
    <location>
        <begin position="1"/>
        <end status="unknown"/>
    </location>
</feature>
<feature type="chain" id="PRO_0000298783" description="Inactive L-threonine 3-dehydrogenase, mitochondrial">
    <location>
        <begin status="unknown"/>
        <end position="230"/>
    </location>
</feature>
<feature type="splice variant" id="VSP_052507" description="In isoform 2 and isoform 3." evidence="5 6">
    <location>
        <begin position="97"/>
        <end position="146"/>
    </location>
</feature>
<feature type="splice variant" id="VSP_052508" description="In isoform 3." evidence="5">
    <original>TMQS</original>
    <variation>ISDA</variation>
    <location>
        <begin position="204"/>
        <end position="207"/>
    </location>
</feature>
<feature type="splice variant" id="VSP_052509" description="In isoform 3." evidence="5">
    <location>
        <begin position="208"/>
        <end position="230"/>
    </location>
</feature>
<feature type="sequence conflict" description="In Ref. 1; AAM50037 and 2; BAB71562." evidence="7" ref="1 2">
    <original>I</original>
    <variation>R</variation>
    <location>
        <position position="85"/>
    </location>
</feature>
<evidence type="ECO:0000250" key="1">
    <source>
        <dbReference type="UniProtKB" id="Q8MIR0"/>
    </source>
</evidence>
<evidence type="ECO:0000255" key="2"/>
<evidence type="ECO:0000269" key="3">
    <source>
    </source>
</evidence>
<evidence type="ECO:0000269" key="4">
    <source>
    </source>
</evidence>
<evidence type="ECO:0000303" key="5">
    <source>
    </source>
</evidence>
<evidence type="ECO:0000303" key="6">
    <source>
    </source>
</evidence>
<evidence type="ECO:0000305" key="7"/>
<evidence type="ECO:0000312" key="8">
    <source>
        <dbReference type="EMBL" id="AAM50036.1"/>
    </source>
</evidence>
<evidence type="ECO:0000312" key="9">
    <source>
        <dbReference type="EMBL" id="BAB71562.1"/>
    </source>
</evidence>
<accession>Q8IZJ6</accession>
<accession>Q8IZJ5</accession>
<accession>Q96LV6</accession>
<organism>
    <name type="scientific">Homo sapiens</name>
    <name type="common">Human</name>
    <dbReference type="NCBI Taxonomy" id="9606"/>
    <lineage>
        <taxon>Eukaryota</taxon>
        <taxon>Metazoa</taxon>
        <taxon>Chordata</taxon>
        <taxon>Craniata</taxon>
        <taxon>Vertebrata</taxon>
        <taxon>Euteleostomi</taxon>
        <taxon>Mammalia</taxon>
        <taxon>Eutheria</taxon>
        <taxon>Euarchontoglires</taxon>
        <taxon>Primates</taxon>
        <taxon>Haplorrhini</taxon>
        <taxon>Catarrhini</taxon>
        <taxon>Hominidae</taxon>
        <taxon>Homo</taxon>
    </lineage>
</organism>
<comment type="subcellular location">
    <subcellularLocation>
        <location evidence="1">Mitochondrion</location>
    </subcellularLocation>
</comment>
<comment type="alternative products">
    <event type="alternative splicing"/>
    <isoform>
        <id>Q8IZJ6-1</id>
        <name evidence="3">1</name>
        <sequence type="displayed"/>
    </isoform>
    <isoform>
        <id>Q8IZJ6-2</id>
        <name evidence="4">2</name>
        <sequence type="described" ref="VSP_052507"/>
    </isoform>
    <isoform>
        <id>Q8IZJ6-3</id>
        <name evidence="3">3</name>
        <sequence type="described" ref="VSP_052507 VSP_052508 VSP_052509"/>
    </isoform>
</comment>
<comment type="tissue specificity">
    <text evidence="3">Expressed in all tissues examined. Detected in most cell types examined, but not observed in endothelial cells, glioma cell lines and some leukemia cell lines.</text>
</comment>
<comment type="similarity">
    <text evidence="7">Belongs to the NAD(P)-dependent epimerase/dehydratase family.</text>
</comment>
<comment type="caution">
    <text evidence="7">According to PubMed:12361482, the human TDH gene is an expressed pseudogene encoding non-functional truncated proteins that are unable to make appropriate contacts with the substrates, L-threonine and NAD(+). Although all exons expected to encode a functional L-threonine 3-dehydrogenase of 369 residues are present in the human genome, all transcripts described encode truncated proteins that result from mutations within the gene causing the loss of acceptor splice site preceding exon 4 and exon 6.</text>
</comment>
<name>TDH_HUMAN</name>
<reference evidence="7 8" key="1">
    <citation type="journal article" date="2002" name="BMC Genet.">
        <title>The human L-threonine 3-dehydrogenase gene is an expressed pseudogene.</title>
        <authorList>
            <person name="Edgar A.J."/>
        </authorList>
    </citation>
    <scope>NUCLEOTIDE SEQUENCE [MRNA] (ISOFORMS 1 AND 3)</scope>
    <scope>TISSUE SPECIFICITY</scope>
    <source>
        <tissue evidence="8">Liver</tissue>
    </source>
</reference>
<reference evidence="7 9" key="2">
    <citation type="journal article" date="2004" name="Nat. Genet.">
        <title>Complete sequencing and characterization of 21,243 full-length human cDNAs.</title>
        <authorList>
            <person name="Ota T."/>
            <person name="Suzuki Y."/>
            <person name="Nishikawa T."/>
            <person name="Otsuki T."/>
            <person name="Sugiyama T."/>
            <person name="Irie R."/>
            <person name="Wakamatsu A."/>
            <person name="Hayashi K."/>
            <person name="Sato H."/>
            <person name="Nagai K."/>
            <person name="Kimura K."/>
            <person name="Makita H."/>
            <person name="Sekine M."/>
            <person name="Obayashi M."/>
            <person name="Nishi T."/>
            <person name="Shibahara T."/>
            <person name="Tanaka T."/>
            <person name="Ishii S."/>
            <person name="Yamamoto J."/>
            <person name="Saito K."/>
            <person name="Kawai Y."/>
            <person name="Isono Y."/>
            <person name="Nakamura Y."/>
            <person name="Nagahari K."/>
            <person name="Murakami K."/>
            <person name="Yasuda T."/>
            <person name="Iwayanagi T."/>
            <person name="Wagatsuma M."/>
            <person name="Shiratori A."/>
            <person name="Sudo H."/>
            <person name="Hosoiri T."/>
            <person name="Kaku Y."/>
            <person name="Kodaira H."/>
            <person name="Kondo H."/>
            <person name="Sugawara M."/>
            <person name="Takahashi M."/>
            <person name="Kanda K."/>
            <person name="Yokoi T."/>
            <person name="Furuya T."/>
            <person name="Kikkawa E."/>
            <person name="Omura Y."/>
            <person name="Abe K."/>
            <person name="Kamihara K."/>
            <person name="Katsuta N."/>
            <person name="Sato K."/>
            <person name="Tanikawa M."/>
            <person name="Yamazaki M."/>
            <person name="Ninomiya K."/>
            <person name="Ishibashi T."/>
            <person name="Yamashita H."/>
            <person name="Murakawa K."/>
            <person name="Fujimori K."/>
            <person name="Tanai H."/>
            <person name="Kimata M."/>
            <person name="Watanabe M."/>
            <person name="Hiraoka S."/>
            <person name="Chiba Y."/>
            <person name="Ishida S."/>
            <person name="Ono Y."/>
            <person name="Takiguchi S."/>
            <person name="Watanabe S."/>
            <person name="Yosida M."/>
            <person name="Hotuta T."/>
            <person name="Kusano J."/>
            <person name="Kanehori K."/>
            <person name="Takahashi-Fujii A."/>
            <person name="Hara H."/>
            <person name="Tanase T.-O."/>
            <person name="Nomura Y."/>
            <person name="Togiya S."/>
            <person name="Komai F."/>
            <person name="Hara R."/>
            <person name="Takeuchi K."/>
            <person name="Arita M."/>
            <person name="Imose N."/>
            <person name="Musashino K."/>
            <person name="Yuuki H."/>
            <person name="Oshima A."/>
            <person name="Sasaki N."/>
            <person name="Aotsuka S."/>
            <person name="Yoshikawa Y."/>
            <person name="Matsunawa H."/>
            <person name="Ichihara T."/>
            <person name="Shiohata N."/>
            <person name="Sano S."/>
            <person name="Moriya S."/>
            <person name="Momiyama H."/>
            <person name="Satoh N."/>
            <person name="Takami S."/>
            <person name="Terashima Y."/>
            <person name="Suzuki O."/>
            <person name="Nakagawa S."/>
            <person name="Senoh A."/>
            <person name="Mizoguchi H."/>
            <person name="Goto Y."/>
            <person name="Shimizu F."/>
            <person name="Wakebe H."/>
            <person name="Hishigaki H."/>
            <person name="Watanabe T."/>
            <person name="Sugiyama A."/>
            <person name="Takemoto M."/>
            <person name="Kawakami B."/>
            <person name="Yamazaki M."/>
            <person name="Watanabe K."/>
            <person name="Kumagai A."/>
            <person name="Itakura S."/>
            <person name="Fukuzumi Y."/>
            <person name="Fujimori Y."/>
            <person name="Komiyama M."/>
            <person name="Tashiro H."/>
            <person name="Tanigami A."/>
            <person name="Fujiwara T."/>
            <person name="Ono T."/>
            <person name="Yamada K."/>
            <person name="Fujii Y."/>
            <person name="Ozaki K."/>
            <person name="Hirao M."/>
            <person name="Ohmori Y."/>
            <person name="Kawabata A."/>
            <person name="Hikiji T."/>
            <person name="Kobatake N."/>
            <person name="Inagaki H."/>
            <person name="Ikema Y."/>
            <person name="Okamoto S."/>
            <person name="Okitani R."/>
            <person name="Kawakami T."/>
            <person name="Noguchi S."/>
            <person name="Itoh T."/>
            <person name="Shigeta K."/>
            <person name="Senba T."/>
            <person name="Matsumura K."/>
            <person name="Nakajima Y."/>
            <person name="Mizuno T."/>
            <person name="Morinaga M."/>
            <person name="Sasaki M."/>
            <person name="Togashi T."/>
            <person name="Oyama M."/>
            <person name="Hata H."/>
            <person name="Watanabe M."/>
            <person name="Komatsu T."/>
            <person name="Mizushima-Sugano J."/>
            <person name="Satoh T."/>
            <person name="Shirai Y."/>
            <person name="Takahashi Y."/>
            <person name="Nakagawa K."/>
            <person name="Okumura K."/>
            <person name="Nagase T."/>
            <person name="Nomura N."/>
            <person name="Kikuchi H."/>
            <person name="Masuho Y."/>
            <person name="Yamashita R."/>
            <person name="Nakai K."/>
            <person name="Yada T."/>
            <person name="Nakamura Y."/>
            <person name="Ohara O."/>
            <person name="Isogai T."/>
            <person name="Sugano S."/>
        </authorList>
    </citation>
    <scope>NUCLEOTIDE SEQUENCE [LARGE SCALE MRNA] (ISOFORM 2)</scope>
    <source>
        <tissue evidence="9">Cerebellum</tissue>
    </source>
</reference>
<reference key="3">
    <citation type="journal article" date="2006" name="Nature">
        <title>DNA sequence and analysis of human chromosome 8.</title>
        <authorList>
            <person name="Nusbaum C."/>
            <person name="Mikkelsen T.S."/>
            <person name="Zody M.C."/>
            <person name="Asakawa S."/>
            <person name="Taudien S."/>
            <person name="Garber M."/>
            <person name="Kodira C.D."/>
            <person name="Schueler M.G."/>
            <person name="Shimizu A."/>
            <person name="Whittaker C.A."/>
            <person name="Chang J.L."/>
            <person name="Cuomo C.A."/>
            <person name="Dewar K."/>
            <person name="FitzGerald M.G."/>
            <person name="Yang X."/>
            <person name="Allen N.R."/>
            <person name="Anderson S."/>
            <person name="Asakawa T."/>
            <person name="Blechschmidt K."/>
            <person name="Bloom T."/>
            <person name="Borowsky M.L."/>
            <person name="Butler J."/>
            <person name="Cook A."/>
            <person name="Corum B."/>
            <person name="DeArellano K."/>
            <person name="DeCaprio D."/>
            <person name="Dooley K.T."/>
            <person name="Dorris L. III"/>
            <person name="Engels R."/>
            <person name="Gloeckner G."/>
            <person name="Hafez N."/>
            <person name="Hagopian D.S."/>
            <person name="Hall J.L."/>
            <person name="Ishikawa S.K."/>
            <person name="Jaffe D.B."/>
            <person name="Kamat A."/>
            <person name="Kudoh J."/>
            <person name="Lehmann R."/>
            <person name="Lokitsang T."/>
            <person name="Macdonald P."/>
            <person name="Major J.E."/>
            <person name="Matthews C.D."/>
            <person name="Mauceli E."/>
            <person name="Menzel U."/>
            <person name="Mihalev A.H."/>
            <person name="Minoshima S."/>
            <person name="Murayama Y."/>
            <person name="Naylor J.W."/>
            <person name="Nicol R."/>
            <person name="Nguyen C."/>
            <person name="O'Leary S.B."/>
            <person name="O'Neill K."/>
            <person name="Parker S.C.J."/>
            <person name="Polley A."/>
            <person name="Raymond C.K."/>
            <person name="Reichwald K."/>
            <person name="Rodriguez J."/>
            <person name="Sasaki T."/>
            <person name="Schilhabel M."/>
            <person name="Siddiqui R."/>
            <person name="Smith C.L."/>
            <person name="Sneddon T.P."/>
            <person name="Talamas J.A."/>
            <person name="Tenzin P."/>
            <person name="Topham K."/>
            <person name="Venkataraman V."/>
            <person name="Wen G."/>
            <person name="Yamazaki S."/>
            <person name="Young S.K."/>
            <person name="Zeng Q."/>
            <person name="Zimmer A.R."/>
            <person name="Rosenthal A."/>
            <person name="Birren B.W."/>
            <person name="Platzer M."/>
            <person name="Shimizu N."/>
            <person name="Lander E.S."/>
        </authorList>
    </citation>
    <scope>NUCLEOTIDE SEQUENCE [LARGE SCALE GENOMIC DNA]</scope>
</reference>
<gene>
    <name evidence="8" type="primary">TDH</name>
    <name type="synonym">SDR14E1P</name>
</gene>
<protein>
    <recommendedName>
        <fullName>Inactive L-threonine 3-dehydrogenase, mitochondrial</fullName>
    </recommendedName>
    <alternativeName>
        <fullName>Short chain dehydrogenase/reductase family 14E member 1 pseudogene</fullName>
    </alternativeName>
</protein>
<keyword id="KW-0025">Alternative splicing</keyword>
<keyword id="KW-0496">Mitochondrion</keyword>
<keyword id="KW-1185">Reference proteome</keyword>
<keyword id="KW-0809">Transit peptide</keyword>